<reference key="1">
    <citation type="journal article" date="2008" name="DNA Res.">
        <title>Determination of the genome sequence of Porphyromonas gingivalis strain ATCC 33277 and genomic comparison with strain W83 revealed extensive genome rearrangements in P. gingivalis.</title>
        <authorList>
            <person name="Naito M."/>
            <person name="Hirakawa H."/>
            <person name="Yamashita A."/>
            <person name="Ohara N."/>
            <person name="Shoji M."/>
            <person name="Yukitake H."/>
            <person name="Nakayama K."/>
            <person name="Toh H."/>
            <person name="Yoshimura F."/>
            <person name="Kuhara S."/>
            <person name="Hattori M."/>
            <person name="Hayashi T."/>
            <person name="Nakayama K."/>
        </authorList>
    </citation>
    <scope>NUCLEOTIDE SEQUENCE [LARGE SCALE GENOMIC DNA]</scope>
    <source>
        <strain>ATCC 33277 / DSM 20709 / CIP 103683 / JCM 12257 / NCTC 11834 / 2561</strain>
    </source>
</reference>
<evidence type="ECO:0000255" key="1">
    <source>
        <dbReference type="HAMAP-Rule" id="MF_00502"/>
    </source>
</evidence>
<evidence type="ECO:0000305" key="2"/>
<feature type="chain" id="PRO_1000126826" description="Large ribosomal subunit protein bL31B">
    <location>
        <begin position="1"/>
        <end position="85"/>
    </location>
</feature>
<accession>B2RIG0</accession>
<protein>
    <recommendedName>
        <fullName evidence="1">Large ribosomal subunit protein bL31B</fullName>
    </recommendedName>
    <alternativeName>
        <fullName evidence="2">50S ribosomal protein L31 type B</fullName>
    </alternativeName>
</protein>
<name>RL31B_PORG3</name>
<dbReference type="EMBL" id="AP009380">
    <property type="protein sequence ID" value="BAG33155.1"/>
    <property type="molecule type" value="Genomic_DNA"/>
</dbReference>
<dbReference type="RefSeq" id="WP_004585129.1">
    <property type="nucleotide sequence ID" value="NZ_CP025930.1"/>
</dbReference>
<dbReference type="SMR" id="B2RIG0"/>
<dbReference type="KEGG" id="pgn:PGN_0636"/>
<dbReference type="eggNOG" id="COG0254">
    <property type="taxonomic scope" value="Bacteria"/>
</dbReference>
<dbReference type="HOGENOM" id="CLU_114306_2_2_10"/>
<dbReference type="OrthoDB" id="9803251at2"/>
<dbReference type="BioCyc" id="PGIN431947:G1G2V-699-MONOMER"/>
<dbReference type="Proteomes" id="UP000008842">
    <property type="component" value="Chromosome"/>
</dbReference>
<dbReference type="GO" id="GO:1990904">
    <property type="term" value="C:ribonucleoprotein complex"/>
    <property type="evidence" value="ECO:0007669"/>
    <property type="project" value="UniProtKB-KW"/>
</dbReference>
<dbReference type="GO" id="GO:0005840">
    <property type="term" value="C:ribosome"/>
    <property type="evidence" value="ECO:0007669"/>
    <property type="project" value="UniProtKB-KW"/>
</dbReference>
<dbReference type="GO" id="GO:0003735">
    <property type="term" value="F:structural constituent of ribosome"/>
    <property type="evidence" value="ECO:0007669"/>
    <property type="project" value="InterPro"/>
</dbReference>
<dbReference type="GO" id="GO:0006412">
    <property type="term" value="P:translation"/>
    <property type="evidence" value="ECO:0007669"/>
    <property type="project" value="UniProtKB-UniRule"/>
</dbReference>
<dbReference type="Gene3D" id="4.10.830.30">
    <property type="entry name" value="Ribosomal protein L31"/>
    <property type="match status" value="1"/>
</dbReference>
<dbReference type="HAMAP" id="MF_00502">
    <property type="entry name" value="Ribosomal_bL31_2"/>
    <property type="match status" value="1"/>
</dbReference>
<dbReference type="InterPro" id="IPR034704">
    <property type="entry name" value="Ribosomal_bL28/bL31-like_sf"/>
</dbReference>
<dbReference type="InterPro" id="IPR002150">
    <property type="entry name" value="Ribosomal_bL31"/>
</dbReference>
<dbReference type="InterPro" id="IPR027493">
    <property type="entry name" value="Ribosomal_bL31_B"/>
</dbReference>
<dbReference type="InterPro" id="IPR042105">
    <property type="entry name" value="Ribosomal_bL31_sf"/>
</dbReference>
<dbReference type="NCBIfam" id="TIGR00105">
    <property type="entry name" value="L31"/>
    <property type="match status" value="1"/>
</dbReference>
<dbReference type="NCBIfam" id="NF002462">
    <property type="entry name" value="PRK01678.1"/>
    <property type="match status" value="1"/>
</dbReference>
<dbReference type="PANTHER" id="PTHR33280">
    <property type="entry name" value="50S RIBOSOMAL PROTEIN L31, CHLOROPLASTIC"/>
    <property type="match status" value="1"/>
</dbReference>
<dbReference type="PANTHER" id="PTHR33280:SF1">
    <property type="entry name" value="LARGE RIBOSOMAL SUBUNIT PROTEIN BL31C"/>
    <property type="match status" value="1"/>
</dbReference>
<dbReference type="Pfam" id="PF01197">
    <property type="entry name" value="Ribosomal_L31"/>
    <property type="match status" value="1"/>
</dbReference>
<dbReference type="PRINTS" id="PR01249">
    <property type="entry name" value="RIBOSOMALL31"/>
</dbReference>
<dbReference type="SUPFAM" id="SSF143800">
    <property type="entry name" value="L28p-like"/>
    <property type="match status" value="1"/>
</dbReference>
<dbReference type="PROSITE" id="PS01143">
    <property type="entry name" value="RIBOSOMAL_L31"/>
    <property type="match status" value="1"/>
</dbReference>
<keyword id="KW-0687">Ribonucleoprotein</keyword>
<keyword id="KW-0689">Ribosomal protein</keyword>
<sequence length="85" mass="9798">MKKGIHPENYRPVVFKDMSNEDIFITRSTMEAKETIEIDGVTYPLIKVEISNTSHPFFTGKAKLVDTAGRVDKFMSRYGDRNKKK</sequence>
<organism>
    <name type="scientific">Porphyromonas gingivalis (strain ATCC 33277 / DSM 20709 / CIP 103683 / JCM 12257 / NCTC 11834 / 2561)</name>
    <dbReference type="NCBI Taxonomy" id="431947"/>
    <lineage>
        <taxon>Bacteria</taxon>
        <taxon>Pseudomonadati</taxon>
        <taxon>Bacteroidota</taxon>
        <taxon>Bacteroidia</taxon>
        <taxon>Bacteroidales</taxon>
        <taxon>Porphyromonadaceae</taxon>
        <taxon>Porphyromonas</taxon>
    </lineage>
</organism>
<comment type="subunit">
    <text evidence="1">Part of the 50S ribosomal subunit.</text>
</comment>
<comment type="similarity">
    <text evidence="1">Belongs to the bacterial ribosomal protein bL31 family. Type B subfamily.</text>
</comment>
<proteinExistence type="inferred from homology"/>
<gene>
    <name evidence="1" type="primary">rpmE2</name>
    <name type="ordered locus">PGN_0636</name>
</gene>